<gene>
    <name type="primary">APOE</name>
</gene>
<accession>P0DMM1</accession>
<dbReference type="EMBL" id="ABRN02348179">
    <property type="status" value="NOT_ANNOTATED_CDS"/>
    <property type="molecule type" value="Genomic_DNA"/>
</dbReference>
<dbReference type="RefSeq" id="XP_033700253.1">
    <property type="nucleotide sequence ID" value="XM_033844362.1"/>
</dbReference>
<dbReference type="SMR" id="P0DMM1"/>
<dbReference type="FunCoup" id="P0DMM1">
    <property type="interactions" value="254"/>
</dbReference>
<dbReference type="STRING" id="9739.ENSTTRP00000008256"/>
<dbReference type="GeneID" id="117308978"/>
<dbReference type="HOGENOM" id="CLU_066029_0_0_1"/>
<dbReference type="InParanoid" id="P0DMM1"/>
<dbReference type="OMA" id="GHMTDAR"/>
<dbReference type="Proteomes" id="UP000245320">
    <property type="component" value="Chromosome 19"/>
</dbReference>
<dbReference type="GO" id="GO:0034360">
    <property type="term" value="C:chylomicron remnant"/>
    <property type="evidence" value="ECO:0007669"/>
    <property type="project" value="Ensembl"/>
</dbReference>
<dbReference type="GO" id="GO:0005783">
    <property type="term" value="C:endoplasmic reticulum"/>
    <property type="evidence" value="ECO:0007669"/>
    <property type="project" value="Ensembl"/>
</dbReference>
<dbReference type="GO" id="GO:0070062">
    <property type="term" value="C:extracellular exosome"/>
    <property type="evidence" value="ECO:0000250"/>
    <property type="project" value="UniProtKB"/>
</dbReference>
<dbReference type="GO" id="GO:0031012">
    <property type="term" value="C:extracellular matrix"/>
    <property type="evidence" value="ECO:0000250"/>
    <property type="project" value="UniProtKB"/>
</dbReference>
<dbReference type="GO" id="GO:0005615">
    <property type="term" value="C:extracellular space"/>
    <property type="evidence" value="ECO:0000250"/>
    <property type="project" value="UniProtKB"/>
</dbReference>
<dbReference type="GO" id="GO:0098978">
    <property type="term" value="C:glutamatergic synapse"/>
    <property type="evidence" value="ECO:0007669"/>
    <property type="project" value="Ensembl"/>
</dbReference>
<dbReference type="GO" id="GO:0005794">
    <property type="term" value="C:Golgi apparatus"/>
    <property type="evidence" value="ECO:0007669"/>
    <property type="project" value="Ensembl"/>
</dbReference>
<dbReference type="GO" id="GO:0034364">
    <property type="term" value="C:high-density lipoprotein particle"/>
    <property type="evidence" value="ECO:0000250"/>
    <property type="project" value="UniProtKB"/>
</dbReference>
<dbReference type="GO" id="GO:0034363">
    <property type="term" value="C:intermediate-density lipoprotein particle"/>
    <property type="evidence" value="ECO:0000250"/>
    <property type="project" value="UniProtKB"/>
</dbReference>
<dbReference type="GO" id="GO:0034362">
    <property type="term" value="C:low-density lipoprotein particle"/>
    <property type="evidence" value="ECO:0000250"/>
    <property type="project" value="UniProtKB"/>
</dbReference>
<dbReference type="GO" id="GO:0042470">
    <property type="term" value="C:melanosome"/>
    <property type="evidence" value="ECO:0007669"/>
    <property type="project" value="Ensembl"/>
</dbReference>
<dbReference type="GO" id="GO:0097487">
    <property type="term" value="C:multivesicular body, internal vesicle"/>
    <property type="evidence" value="ECO:0000250"/>
    <property type="project" value="UniProtKB"/>
</dbReference>
<dbReference type="GO" id="GO:0005886">
    <property type="term" value="C:plasma membrane"/>
    <property type="evidence" value="ECO:0007669"/>
    <property type="project" value="GOC"/>
</dbReference>
<dbReference type="GO" id="GO:0043083">
    <property type="term" value="C:synaptic cleft"/>
    <property type="evidence" value="ECO:0007669"/>
    <property type="project" value="Ensembl"/>
</dbReference>
<dbReference type="GO" id="GO:0034361">
    <property type="term" value="C:very-low-density lipoprotein particle"/>
    <property type="evidence" value="ECO:0000250"/>
    <property type="project" value="UniProtKB"/>
</dbReference>
<dbReference type="GO" id="GO:0001540">
    <property type="term" value="F:amyloid-beta binding"/>
    <property type="evidence" value="ECO:0007669"/>
    <property type="project" value="Ensembl"/>
</dbReference>
<dbReference type="GO" id="GO:0016209">
    <property type="term" value="F:antioxidant activity"/>
    <property type="evidence" value="ECO:0007669"/>
    <property type="project" value="Ensembl"/>
</dbReference>
<dbReference type="GO" id="GO:0120020">
    <property type="term" value="F:cholesterol transfer activity"/>
    <property type="evidence" value="ECO:0007669"/>
    <property type="project" value="Ensembl"/>
</dbReference>
<dbReference type="GO" id="GO:0019899">
    <property type="term" value="F:enzyme binding"/>
    <property type="evidence" value="ECO:0007669"/>
    <property type="project" value="Ensembl"/>
</dbReference>
<dbReference type="GO" id="GO:0043395">
    <property type="term" value="F:heparan sulfate proteoglycan binding"/>
    <property type="evidence" value="ECO:0000250"/>
    <property type="project" value="UniProtKB"/>
</dbReference>
<dbReference type="GO" id="GO:0008201">
    <property type="term" value="F:heparin binding"/>
    <property type="evidence" value="ECO:0000250"/>
    <property type="project" value="UniProtKB"/>
</dbReference>
<dbReference type="GO" id="GO:0042802">
    <property type="term" value="F:identical protein binding"/>
    <property type="evidence" value="ECO:0000250"/>
    <property type="project" value="UniProtKB"/>
</dbReference>
<dbReference type="GO" id="GO:0071813">
    <property type="term" value="F:lipoprotein particle binding"/>
    <property type="evidence" value="ECO:0007669"/>
    <property type="project" value="Ensembl"/>
</dbReference>
<dbReference type="GO" id="GO:0050750">
    <property type="term" value="F:low-density lipoprotein particle receptor binding"/>
    <property type="evidence" value="ECO:0000250"/>
    <property type="project" value="UniProtKB"/>
</dbReference>
<dbReference type="GO" id="GO:0046911">
    <property type="term" value="F:metal chelating activity"/>
    <property type="evidence" value="ECO:0007669"/>
    <property type="project" value="Ensembl"/>
</dbReference>
<dbReference type="GO" id="GO:0060228">
    <property type="term" value="F:phosphatidylcholine-sterol O-acyltransferase activator activity"/>
    <property type="evidence" value="ECO:0007669"/>
    <property type="project" value="Ensembl"/>
</dbReference>
<dbReference type="GO" id="GO:0005543">
    <property type="term" value="F:phospholipid binding"/>
    <property type="evidence" value="ECO:0007669"/>
    <property type="project" value="Ensembl"/>
</dbReference>
<dbReference type="GO" id="GO:0042803">
    <property type="term" value="F:protein homodimerization activity"/>
    <property type="evidence" value="ECO:0007669"/>
    <property type="project" value="Ensembl"/>
</dbReference>
<dbReference type="GO" id="GO:0048018">
    <property type="term" value="F:receptor ligand activity"/>
    <property type="evidence" value="ECO:0007669"/>
    <property type="project" value="Ensembl"/>
</dbReference>
<dbReference type="GO" id="GO:0048156">
    <property type="term" value="F:tau protein binding"/>
    <property type="evidence" value="ECO:0007669"/>
    <property type="project" value="Ensembl"/>
</dbReference>
<dbReference type="GO" id="GO:0070326">
    <property type="term" value="F:very-low-density lipoprotein particle receptor binding"/>
    <property type="evidence" value="ECO:0007669"/>
    <property type="project" value="Ensembl"/>
</dbReference>
<dbReference type="GO" id="GO:0097113">
    <property type="term" value="P:AMPA glutamate receptor clustering"/>
    <property type="evidence" value="ECO:0007669"/>
    <property type="project" value="Ensembl"/>
</dbReference>
<dbReference type="GO" id="GO:0042982">
    <property type="term" value="P:amyloid precursor protein metabolic process"/>
    <property type="evidence" value="ECO:0007669"/>
    <property type="project" value="Ensembl"/>
</dbReference>
<dbReference type="GO" id="GO:0048844">
    <property type="term" value="P:artery morphogenesis"/>
    <property type="evidence" value="ECO:0007669"/>
    <property type="project" value="Ensembl"/>
</dbReference>
<dbReference type="GO" id="GO:0071402">
    <property type="term" value="P:cellular response to lipoprotein particle stimulus"/>
    <property type="evidence" value="ECO:0007669"/>
    <property type="project" value="Ensembl"/>
</dbReference>
<dbReference type="GO" id="GO:0006707">
    <property type="term" value="P:cholesterol catabolic process"/>
    <property type="evidence" value="ECO:0007669"/>
    <property type="project" value="Ensembl"/>
</dbReference>
<dbReference type="GO" id="GO:0033344">
    <property type="term" value="P:cholesterol efflux"/>
    <property type="evidence" value="ECO:0000250"/>
    <property type="project" value="UniProtKB"/>
</dbReference>
<dbReference type="GO" id="GO:0042632">
    <property type="term" value="P:cholesterol homeostasis"/>
    <property type="evidence" value="ECO:0007669"/>
    <property type="project" value="Ensembl"/>
</dbReference>
<dbReference type="GO" id="GO:0034382">
    <property type="term" value="P:chylomicron remnant clearance"/>
    <property type="evidence" value="ECO:0000250"/>
    <property type="project" value="UniProtKB"/>
</dbReference>
<dbReference type="GO" id="GO:0055089">
    <property type="term" value="P:fatty acid homeostasis"/>
    <property type="evidence" value="ECO:0007669"/>
    <property type="project" value="Ensembl"/>
</dbReference>
<dbReference type="GO" id="GO:0007186">
    <property type="term" value="P:G protein-coupled receptor signaling pathway"/>
    <property type="evidence" value="ECO:0007669"/>
    <property type="project" value="Ensembl"/>
</dbReference>
<dbReference type="GO" id="GO:0010467">
    <property type="term" value="P:gene expression"/>
    <property type="evidence" value="ECO:0007669"/>
    <property type="project" value="Ensembl"/>
</dbReference>
<dbReference type="GO" id="GO:0034380">
    <property type="term" value="P:high-density lipoprotein particle assembly"/>
    <property type="evidence" value="ECO:0000250"/>
    <property type="project" value="UniProtKB"/>
</dbReference>
<dbReference type="GO" id="GO:0034384">
    <property type="term" value="P:high-density lipoprotein particle clearance"/>
    <property type="evidence" value="ECO:0007669"/>
    <property type="project" value="Ensembl"/>
</dbReference>
<dbReference type="GO" id="GO:0034375">
    <property type="term" value="P:high-density lipoprotein particle remodeling"/>
    <property type="evidence" value="ECO:0007669"/>
    <property type="project" value="Ensembl"/>
</dbReference>
<dbReference type="GO" id="GO:0071831">
    <property type="term" value="P:intermediate-density lipoprotein particle clearance"/>
    <property type="evidence" value="ECO:0000250"/>
    <property type="project" value="UniProtKB"/>
</dbReference>
<dbReference type="GO" id="GO:0006874">
    <property type="term" value="P:intracellular calcium ion homeostasis"/>
    <property type="evidence" value="ECO:0007669"/>
    <property type="project" value="Ensembl"/>
</dbReference>
<dbReference type="GO" id="GO:0010877">
    <property type="term" value="P:lipid transport involved in lipid storage"/>
    <property type="evidence" value="ECO:0007669"/>
    <property type="project" value="Ensembl"/>
</dbReference>
<dbReference type="GO" id="GO:0042158">
    <property type="term" value="P:lipoprotein biosynthetic process"/>
    <property type="evidence" value="ECO:0000250"/>
    <property type="project" value="UniProtKB"/>
</dbReference>
<dbReference type="GO" id="GO:0042159">
    <property type="term" value="P:lipoprotein catabolic process"/>
    <property type="evidence" value="ECO:0007669"/>
    <property type="project" value="Ensembl"/>
</dbReference>
<dbReference type="GO" id="GO:0035641">
    <property type="term" value="P:locomotory exploration behavior"/>
    <property type="evidence" value="ECO:0007669"/>
    <property type="project" value="Ensembl"/>
</dbReference>
<dbReference type="GO" id="GO:0015909">
    <property type="term" value="P:long-chain fatty acid transport"/>
    <property type="evidence" value="ECO:0007669"/>
    <property type="project" value="Ensembl"/>
</dbReference>
<dbReference type="GO" id="GO:0007616">
    <property type="term" value="P:long-term memory"/>
    <property type="evidence" value="ECO:0007669"/>
    <property type="project" value="Ensembl"/>
</dbReference>
<dbReference type="GO" id="GO:0034374">
    <property type="term" value="P:low-density lipoprotein particle remodeling"/>
    <property type="evidence" value="ECO:0007669"/>
    <property type="project" value="Ensembl"/>
</dbReference>
<dbReference type="GO" id="GO:0051651">
    <property type="term" value="P:maintenance of location in cell"/>
    <property type="evidence" value="ECO:0007669"/>
    <property type="project" value="Ensembl"/>
</dbReference>
<dbReference type="GO" id="GO:0032438">
    <property type="term" value="P:melanosome organization"/>
    <property type="evidence" value="ECO:0000250"/>
    <property type="project" value="UniProtKB"/>
</dbReference>
<dbReference type="GO" id="GO:1905907">
    <property type="term" value="P:negative regulation of amyloid fibril formation"/>
    <property type="evidence" value="ECO:0007669"/>
    <property type="project" value="Ensembl"/>
</dbReference>
<dbReference type="GO" id="GO:1902430">
    <property type="term" value="P:negative regulation of amyloid-beta formation"/>
    <property type="evidence" value="ECO:0007669"/>
    <property type="project" value="Ensembl"/>
</dbReference>
<dbReference type="GO" id="GO:0043537">
    <property type="term" value="P:negative regulation of blood vessel endothelial cell migration"/>
    <property type="evidence" value="ECO:0007669"/>
    <property type="project" value="Ensembl"/>
</dbReference>
<dbReference type="GO" id="GO:0090090">
    <property type="term" value="P:negative regulation of canonical Wnt signaling pathway"/>
    <property type="evidence" value="ECO:0007669"/>
    <property type="project" value="Ensembl"/>
</dbReference>
<dbReference type="GO" id="GO:0045541">
    <property type="term" value="P:negative regulation of cholesterol biosynthetic process"/>
    <property type="evidence" value="ECO:0007669"/>
    <property type="project" value="Ensembl"/>
</dbReference>
<dbReference type="GO" id="GO:0001937">
    <property type="term" value="P:negative regulation of endothelial cell proliferation"/>
    <property type="evidence" value="ECO:0007669"/>
    <property type="project" value="Ensembl"/>
</dbReference>
<dbReference type="GO" id="GO:0010629">
    <property type="term" value="P:negative regulation of gene expression"/>
    <property type="evidence" value="ECO:0007669"/>
    <property type="project" value="Ensembl"/>
</dbReference>
<dbReference type="GO" id="GO:0050728">
    <property type="term" value="P:negative regulation of inflammatory response"/>
    <property type="evidence" value="ECO:0007669"/>
    <property type="project" value="Ensembl"/>
</dbReference>
<dbReference type="GO" id="GO:1900272">
    <property type="term" value="P:negative regulation of long-term synaptic potentiation"/>
    <property type="evidence" value="ECO:0007669"/>
    <property type="project" value="Ensembl"/>
</dbReference>
<dbReference type="GO" id="GO:0010977">
    <property type="term" value="P:negative regulation of neuron projection development"/>
    <property type="evidence" value="ECO:0007669"/>
    <property type="project" value="Ensembl"/>
</dbReference>
<dbReference type="GO" id="GO:0010544">
    <property type="term" value="P:negative regulation of platelet activation"/>
    <property type="evidence" value="ECO:0007669"/>
    <property type="project" value="Ensembl"/>
</dbReference>
<dbReference type="GO" id="GO:0050709">
    <property type="term" value="P:negative regulation of protein secretion"/>
    <property type="evidence" value="ECO:0007669"/>
    <property type="project" value="Ensembl"/>
</dbReference>
<dbReference type="GO" id="GO:0048662">
    <property type="term" value="P:negative regulation of smooth muscle cell proliferation"/>
    <property type="evidence" value="ECO:0007669"/>
    <property type="project" value="Ensembl"/>
</dbReference>
<dbReference type="GO" id="GO:0090209">
    <property type="term" value="P:negative regulation of triglyceride metabolic process"/>
    <property type="evidence" value="ECO:0007669"/>
    <property type="project" value="Ensembl"/>
</dbReference>
<dbReference type="GO" id="GO:0031175">
    <property type="term" value="P:neuron projection development"/>
    <property type="evidence" value="ECO:0007669"/>
    <property type="project" value="Ensembl"/>
</dbReference>
<dbReference type="GO" id="GO:0038060">
    <property type="term" value="P:nitric oxide-cGMP-mediated signaling"/>
    <property type="evidence" value="ECO:0007669"/>
    <property type="project" value="Ensembl"/>
</dbReference>
<dbReference type="GO" id="GO:0097114">
    <property type="term" value="P:NMDA glutamate receptor clustering"/>
    <property type="evidence" value="ECO:0007669"/>
    <property type="project" value="Ensembl"/>
</dbReference>
<dbReference type="GO" id="GO:0033700">
    <property type="term" value="P:phospholipid efflux"/>
    <property type="evidence" value="ECO:0007669"/>
    <property type="project" value="Ensembl"/>
</dbReference>
<dbReference type="GO" id="GO:0044794">
    <property type="term" value="P:positive regulation by host of viral process"/>
    <property type="evidence" value="ECO:0007669"/>
    <property type="project" value="Ensembl"/>
</dbReference>
<dbReference type="GO" id="GO:1900223">
    <property type="term" value="P:positive regulation of amyloid-beta clearance"/>
    <property type="evidence" value="ECO:0007669"/>
    <property type="project" value="Ensembl"/>
</dbReference>
<dbReference type="GO" id="GO:0010875">
    <property type="term" value="P:positive regulation of cholesterol efflux"/>
    <property type="evidence" value="ECO:0007669"/>
    <property type="project" value="Ensembl"/>
</dbReference>
<dbReference type="GO" id="GO:0090205">
    <property type="term" value="P:positive regulation of cholesterol metabolic process"/>
    <property type="evidence" value="ECO:0007669"/>
    <property type="project" value="Ensembl"/>
</dbReference>
<dbReference type="GO" id="GO:0060999">
    <property type="term" value="P:positive regulation of dendritic spine development"/>
    <property type="evidence" value="ECO:0007669"/>
    <property type="project" value="Ensembl"/>
</dbReference>
<dbReference type="GO" id="GO:1902952">
    <property type="term" value="P:positive regulation of dendritic spine maintenance"/>
    <property type="evidence" value="ECO:0007669"/>
    <property type="project" value="Ensembl"/>
</dbReference>
<dbReference type="GO" id="GO:0045893">
    <property type="term" value="P:positive regulation of DNA-templated transcription"/>
    <property type="evidence" value="ECO:0007669"/>
    <property type="project" value="Ensembl"/>
</dbReference>
<dbReference type="GO" id="GO:0045807">
    <property type="term" value="P:positive regulation of endocytosis"/>
    <property type="evidence" value="ECO:0007669"/>
    <property type="project" value="Ensembl"/>
</dbReference>
<dbReference type="GO" id="GO:0070374">
    <property type="term" value="P:positive regulation of ERK1 and ERK2 cascade"/>
    <property type="evidence" value="ECO:0007669"/>
    <property type="project" value="Ensembl"/>
</dbReference>
<dbReference type="GO" id="GO:0046889">
    <property type="term" value="P:positive regulation of lipid biosynthetic process"/>
    <property type="evidence" value="ECO:0007669"/>
    <property type="project" value="Ensembl"/>
</dbReference>
<dbReference type="GO" id="GO:1903002">
    <property type="term" value="P:positive regulation of lipid transport across blood-brain barrier"/>
    <property type="evidence" value="ECO:0007669"/>
    <property type="project" value="Ensembl"/>
</dbReference>
<dbReference type="GO" id="GO:0140077">
    <property type="term" value="P:positive regulation of lipoprotein transport"/>
    <property type="evidence" value="ECO:0007669"/>
    <property type="project" value="Ensembl"/>
</dbReference>
<dbReference type="GO" id="GO:0032805">
    <property type="term" value="P:positive regulation of low-density lipoprotein particle receptor catabolic process"/>
    <property type="evidence" value="ECO:0007669"/>
    <property type="project" value="Ensembl"/>
</dbReference>
<dbReference type="GO" id="GO:0051044">
    <property type="term" value="P:positive regulation of membrane protein ectodomain proteolysis"/>
    <property type="evidence" value="ECO:0007669"/>
    <property type="project" value="Ensembl"/>
</dbReference>
<dbReference type="GO" id="GO:0010976">
    <property type="term" value="P:positive regulation of neuron projection development"/>
    <property type="evidence" value="ECO:0007669"/>
    <property type="project" value="Ensembl"/>
</dbReference>
<dbReference type="GO" id="GO:0045429">
    <property type="term" value="P:positive regulation of nitric oxide biosynthetic process"/>
    <property type="evidence" value="ECO:0007669"/>
    <property type="project" value="Ensembl"/>
</dbReference>
<dbReference type="GO" id="GO:1902995">
    <property type="term" value="P:positive regulation of phospholipid efflux"/>
    <property type="evidence" value="ECO:0007669"/>
    <property type="project" value="Ensembl"/>
</dbReference>
<dbReference type="GO" id="GO:0017038">
    <property type="term" value="P:protein import"/>
    <property type="evidence" value="ECO:0007669"/>
    <property type="project" value="Ensembl"/>
</dbReference>
<dbReference type="GO" id="GO:0006898">
    <property type="term" value="P:receptor-mediated endocytosis"/>
    <property type="evidence" value="ECO:0007669"/>
    <property type="project" value="Ensembl"/>
</dbReference>
<dbReference type="GO" id="GO:0042981">
    <property type="term" value="P:regulation of apoptotic process"/>
    <property type="evidence" value="ECO:0007669"/>
    <property type="project" value="Ensembl"/>
</dbReference>
<dbReference type="GO" id="GO:2000822">
    <property type="term" value="P:regulation of behavioral fear response"/>
    <property type="evidence" value="ECO:0007669"/>
    <property type="project" value="Ensembl"/>
</dbReference>
<dbReference type="GO" id="GO:0032489">
    <property type="term" value="P:regulation of Cdc42 protein signal transduction"/>
    <property type="evidence" value="ECO:0007669"/>
    <property type="project" value="Ensembl"/>
</dbReference>
<dbReference type="GO" id="GO:1905890">
    <property type="term" value="P:regulation of cellular response to very-low-density lipoprotein particle stimulus"/>
    <property type="evidence" value="ECO:0007669"/>
    <property type="project" value="Ensembl"/>
</dbReference>
<dbReference type="GO" id="GO:0045088">
    <property type="term" value="P:regulation of innate immune response"/>
    <property type="evidence" value="ECO:0007669"/>
    <property type="project" value="Ensembl"/>
</dbReference>
<dbReference type="GO" id="GO:0061136">
    <property type="term" value="P:regulation of proteasomal protein catabolic process"/>
    <property type="evidence" value="ECO:0007669"/>
    <property type="project" value="Ensembl"/>
</dbReference>
<dbReference type="GO" id="GO:0043254">
    <property type="term" value="P:regulation of protein-containing complex assembly"/>
    <property type="evidence" value="ECO:0007669"/>
    <property type="project" value="Ensembl"/>
</dbReference>
<dbReference type="GO" id="GO:0061771">
    <property type="term" value="P:response to caloric restriction"/>
    <property type="evidence" value="ECO:0007669"/>
    <property type="project" value="Ensembl"/>
</dbReference>
<dbReference type="GO" id="GO:0002021">
    <property type="term" value="P:response to dietary excess"/>
    <property type="evidence" value="ECO:0007669"/>
    <property type="project" value="Ensembl"/>
</dbReference>
<dbReference type="GO" id="GO:0006979">
    <property type="term" value="P:response to oxidative stress"/>
    <property type="evidence" value="ECO:0007669"/>
    <property type="project" value="Ensembl"/>
</dbReference>
<dbReference type="GO" id="GO:0043691">
    <property type="term" value="P:reverse cholesterol transport"/>
    <property type="evidence" value="ECO:0007669"/>
    <property type="project" value="Ensembl"/>
</dbReference>
<dbReference type="GO" id="GO:0070328">
    <property type="term" value="P:triglyceride homeostasis"/>
    <property type="evidence" value="ECO:0007669"/>
    <property type="project" value="Ensembl"/>
</dbReference>
<dbReference type="GO" id="GO:0006641">
    <property type="term" value="P:triglyceride metabolic process"/>
    <property type="evidence" value="ECO:0007669"/>
    <property type="project" value="Ensembl"/>
</dbReference>
<dbReference type="GO" id="GO:0071830">
    <property type="term" value="P:triglyceride-rich lipoprotein particle clearance"/>
    <property type="evidence" value="ECO:0000250"/>
    <property type="project" value="UniProtKB"/>
</dbReference>
<dbReference type="GO" id="GO:0042311">
    <property type="term" value="P:vasodilation"/>
    <property type="evidence" value="ECO:0007669"/>
    <property type="project" value="Ensembl"/>
</dbReference>
<dbReference type="GO" id="GO:0034447">
    <property type="term" value="P:very-low-density lipoprotein particle clearance"/>
    <property type="evidence" value="ECO:0000250"/>
    <property type="project" value="UniProtKB"/>
</dbReference>
<dbReference type="GO" id="GO:0034372">
    <property type="term" value="P:very-low-density lipoprotein particle remodeling"/>
    <property type="evidence" value="ECO:0007669"/>
    <property type="project" value="Ensembl"/>
</dbReference>
<dbReference type="GO" id="GO:0019068">
    <property type="term" value="P:virion assembly"/>
    <property type="evidence" value="ECO:0007669"/>
    <property type="project" value="Ensembl"/>
</dbReference>
<dbReference type="FunFam" id="1.20.120.20:FF:000002">
    <property type="entry name" value="Apolipoprotein E"/>
    <property type="match status" value="1"/>
</dbReference>
<dbReference type="FunFam" id="1.20.120.20:FF:000003">
    <property type="entry name" value="Apolipoprotein E"/>
    <property type="match status" value="1"/>
</dbReference>
<dbReference type="FunFam" id="1.20.5.1230:FF:000002">
    <property type="entry name" value="Apolipoprotein E"/>
    <property type="match status" value="1"/>
</dbReference>
<dbReference type="Gene3D" id="1.20.120.20">
    <property type="entry name" value="Apolipoprotein"/>
    <property type="match status" value="2"/>
</dbReference>
<dbReference type="InterPro" id="IPR000074">
    <property type="entry name" value="ApoA_E"/>
</dbReference>
<dbReference type="InterPro" id="IPR050163">
    <property type="entry name" value="Apolipoprotein_A1/A4/E"/>
</dbReference>
<dbReference type="PANTHER" id="PTHR18976">
    <property type="entry name" value="APOLIPOPROTEIN"/>
    <property type="match status" value="1"/>
</dbReference>
<dbReference type="PANTHER" id="PTHR18976:SF2">
    <property type="entry name" value="APOLIPOPROTEIN E"/>
    <property type="match status" value="1"/>
</dbReference>
<dbReference type="Pfam" id="PF01442">
    <property type="entry name" value="Apolipoprotein"/>
    <property type="match status" value="1"/>
</dbReference>
<dbReference type="SUPFAM" id="SSF58113">
    <property type="entry name" value="Apolipoprotein A-I"/>
    <property type="match status" value="1"/>
</dbReference>
<evidence type="ECO:0000250" key="1">
    <source>
        <dbReference type="UniProtKB" id="P02649"/>
    </source>
</evidence>
<evidence type="ECO:0000255" key="2"/>
<evidence type="ECO:0000305" key="3"/>
<name>APOE_TURTR</name>
<protein>
    <recommendedName>
        <fullName>Apolipoprotein E</fullName>
        <shortName>Apo-E</shortName>
    </recommendedName>
</protein>
<keyword id="KW-0162">Chylomicron</keyword>
<keyword id="KW-0967">Endosome</keyword>
<keyword id="KW-0272">Extracellular matrix</keyword>
<keyword id="KW-0325">Glycoprotein</keyword>
<keyword id="KW-0345">HDL</keyword>
<keyword id="KW-0358">Heparin-binding</keyword>
<keyword id="KW-0445">Lipid transport</keyword>
<keyword id="KW-0446">Lipid-binding</keyword>
<keyword id="KW-0597">Phosphoprotein</keyword>
<keyword id="KW-1185">Reference proteome</keyword>
<keyword id="KW-0677">Repeat</keyword>
<keyword id="KW-0964">Secreted</keyword>
<keyword id="KW-0732">Signal</keyword>
<keyword id="KW-0813">Transport</keyword>
<keyword id="KW-0850">VLDL</keyword>
<reference key="1">
    <citation type="journal article" date="2011" name="Nature">
        <title>A high-resolution map of human evolutionary constraint using 29 mammals.</title>
        <authorList>
            <person name="Lindblad-Toh K."/>
            <person name="Garber M."/>
            <person name="Zuk O."/>
            <person name="Lin M.F."/>
            <person name="Parker B.J."/>
            <person name="Washietl S."/>
            <person name="Kheradpour P."/>
            <person name="Ernst J."/>
            <person name="Jordan G."/>
            <person name="Mauceli E."/>
            <person name="Ward L.D."/>
            <person name="Lowe C.B."/>
            <person name="Holloway A.K."/>
            <person name="Clamp M."/>
            <person name="Gnerre S."/>
            <person name="Alfoldi J."/>
            <person name="Beal K."/>
            <person name="Chang J."/>
            <person name="Clawson H."/>
            <person name="Cuff J."/>
            <person name="Di Palma F."/>
            <person name="Fitzgerald S."/>
            <person name="Flicek P."/>
            <person name="Guttman M."/>
            <person name="Hubisz M.J."/>
            <person name="Jaffe D.B."/>
            <person name="Jungreis I."/>
            <person name="Kent W.J."/>
            <person name="Kostka D."/>
            <person name="Lara M."/>
            <person name="Martins A.L."/>
            <person name="Massingham T."/>
            <person name="Moltke I."/>
            <person name="Raney B.J."/>
            <person name="Rasmussen M.D."/>
            <person name="Robinson J."/>
            <person name="Stark A."/>
            <person name="Vilella A.J."/>
            <person name="Wen J."/>
            <person name="Xie X."/>
            <person name="Zody M.C."/>
            <person name="Baldwin J."/>
            <person name="Bloom T."/>
            <person name="Chin C.W."/>
            <person name="Heiman D."/>
            <person name="Nicol R."/>
            <person name="Nusbaum C."/>
            <person name="Young S."/>
            <person name="Wilkinson J."/>
            <person name="Worley K.C."/>
            <person name="Kovar C.L."/>
            <person name="Muzny D.M."/>
            <person name="Gibbs R.A."/>
            <person name="Cree A."/>
            <person name="Dihn H.H."/>
            <person name="Fowler G."/>
            <person name="Jhangiani S."/>
            <person name="Joshi V."/>
            <person name="Lee S."/>
            <person name="Lewis L.R."/>
            <person name="Nazareth L.V."/>
            <person name="Okwuonu G."/>
            <person name="Santibanez J."/>
            <person name="Warren W.C."/>
            <person name="Mardis E.R."/>
            <person name="Weinstock G.M."/>
            <person name="Wilson R.K."/>
            <person name="Delehaunty K."/>
            <person name="Dooling D."/>
            <person name="Fronik C."/>
            <person name="Fulton L."/>
            <person name="Fulton B."/>
            <person name="Graves T."/>
            <person name="Minx P."/>
            <person name="Sodergren E."/>
            <person name="Birney E."/>
            <person name="Margulies E.H."/>
            <person name="Herrero J."/>
            <person name="Green E.D."/>
            <person name="Haussler D."/>
            <person name="Siepel A."/>
            <person name="Goldman N."/>
            <person name="Pollard K.S."/>
            <person name="Pedersen J.S."/>
            <person name="Lander E.S."/>
            <person name="Kellis M."/>
        </authorList>
    </citation>
    <scope>NUCLEOTIDE SEQUENCE [LARGE SCALE GENOMIC DNA]</scope>
</reference>
<reference key="2">
    <citation type="unpublished observations" date="2014-06">
        <authorList>
            <person name="Puppione D.L."/>
        </authorList>
    </citation>
    <scope>IDENTIFICATION</scope>
</reference>
<proteinExistence type="inferred from homology"/>
<organism>
    <name type="scientific">Tursiops truncatus</name>
    <name type="common">Atlantic bottle-nosed dolphin</name>
    <name type="synonym">Delphinus truncatus</name>
    <dbReference type="NCBI Taxonomy" id="9739"/>
    <lineage>
        <taxon>Eukaryota</taxon>
        <taxon>Metazoa</taxon>
        <taxon>Chordata</taxon>
        <taxon>Craniata</taxon>
        <taxon>Vertebrata</taxon>
        <taxon>Euteleostomi</taxon>
        <taxon>Mammalia</taxon>
        <taxon>Eutheria</taxon>
        <taxon>Laurasiatheria</taxon>
        <taxon>Artiodactyla</taxon>
        <taxon>Whippomorpha</taxon>
        <taxon>Cetacea</taxon>
        <taxon>Odontoceti</taxon>
        <taxon>Delphinidae</taxon>
        <taxon>Tursiops</taxon>
    </lineage>
</organism>
<comment type="function">
    <text evidence="1">APOE is an apolipoprotein, a protein associating with lipid particles, that mainly functions in lipoprotein-mediated lipid transport between organs via the plasma and interstitial fluids. APOE is a core component of plasma lipoproteins and is involved in their production, conversion and clearance. Apolipoproteins are amphipathic molecules that interact both with lipids of the lipoprotein particle core and the aqueous environment of the plasma. As such, APOE associates with chylomicrons, chylomicron remnants, very low density lipoproteins (VLDL) and intermediate density lipoproteins (IDL) but shows a preferential binding to high-density lipoproteins (HDL). It also binds a wide range of cellular receptors including the LDL receptor/LDLR and the very low-density lipoprotein receptor/VLDLR that mediate the cellular uptake of the APOE-containing lipoprotein particles. Finally, APOE also has a heparin-binding activity and binds heparan-sulfate proteoglycans on the surface of cells, a property that supports the capture and the receptor-mediated uptake of APOE-containing lipoproteins by cells.</text>
</comment>
<comment type="subunit">
    <text evidence="1">Homotetramer. May interact with ABCA1; functionally associated with ABCA1 in the biogenesis of HDLs. May interact with APP/A4 amyloid-beta peptide; the interaction is extremely stable in vitro but its physiological significance is unclear. May interact with MAPT. May interact with MAP2. In the cerebrospinal fluid, interacts with secreted SORL1. Interacts with PMEL; this allows the loading of PMEL luminal fragment on ILVs to induce fibril nucleation.</text>
</comment>
<comment type="subcellular location">
    <subcellularLocation>
        <location evidence="1">Secreted</location>
    </subcellularLocation>
    <subcellularLocation>
        <location evidence="1">Secreted</location>
        <location evidence="1">Extracellular space</location>
    </subcellularLocation>
    <subcellularLocation>
        <location evidence="1">Secreted</location>
        <location evidence="1">Extracellular space</location>
        <location evidence="1">Extracellular matrix</location>
    </subcellularLocation>
    <subcellularLocation>
        <location evidence="1">Extracellular vesicle</location>
    </subcellularLocation>
    <subcellularLocation>
        <location evidence="1">Endosome</location>
        <location evidence="1">Multivesicular body</location>
    </subcellularLocation>
    <text evidence="1">In the plasma, APOE is associated with chylomicrons, chylomicrons remnants, VLDL, LDL and HDL lipoproteins. Lipid poor oligomeric APOE is associated with the extracellular matrix in a calcium- and heparan-sulfate proteoglycans-dependent manner. Lipidation induces the release from the extracellular matrix. Colocalizes with CD63 and PMEL at exosomes and in intraluminal vesicles within multivesicular endosomes.</text>
</comment>
<comment type="PTM">
    <text evidence="1">APOE exists as multiple glycosylated and sialylated glycoforms within cells and in plasma. The extent of glycosylation and sialylation are tissue and context specific.</text>
</comment>
<comment type="PTM">
    <text evidence="1">Glycated in plasma VLDL.</text>
</comment>
<comment type="PTM">
    <text evidence="1">Phosphorylated by FAM20C in the extracellular medium.</text>
</comment>
<comment type="similarity">
    <text evidence="3">Belongs to the apolipoprotein A1/A4/E family.</text>
</comment>
<feature type="signal peptide" evidence="2">
    <location>
        <begin position="1"/>
        <end position="18"/>
    </location>
</feature>
<feature type="chain" id="PRO_0000429979" description="Apolipoprotein E">
    <location>
        <begin position="19"/>
        <end position="316"/>
    </location>
</feature>
<feature type="repeat" description="1">
    <location>
        <begin position="79"/>
        <end position="100"/>
    </location>
</feature>
<feature type="repeat" description="2">
    <location>
        <begin position="101"/>
        <end position="122"/>
    </location>
</feature>
<feature type="repeat" description="3">
    <location>
        <begin position="123"/>
        <end position="144"/>
    </location>
</feature>
<feature type="repeat" description="4">
    <location>
        <begin position="145"/>
        <end position="166"/>
    </location>
</feature>
<feature type="repeat" description="5">
    <location>
        <begin position="167"/>
        <end position="188"/>
    </location>
</feature>
<feature type="repeat" description="6">
    <location>
        <begin position="189"/>
        <end position="210"/>
    </location>
</feature>
<feature type="repeat" description="7">
    <location>
        <begin position="211"/>
        <end position="232"/>
    </location>
</feature>
<feature type="repeat" description="8">
    <location>
        <begin position="233"/>
        <end position="254"/>
    </location>
</feature>
<feature type="region of interest" description="8 X 22 AA approximate tandem repeats">
    <location>
        <begin position="79"/>
        <end position="254"/>
    </location>
</feature>
<feature type="region of interest" description="LDL and other lipoprotein receptors binding" evidence="1">
    <location>
        <begin position="157"/>
        <end position="167"/>
    </location>
</feature>
<feature type="region of interest" description="Lipid-binding and lipoprotein association" evidence="1">
    <location>
        <begin position="209"/>
        <end position="289"/>
    </location>
</feature>
<feature type="region of interest" description="Homooligomerization" evidence="1">
    <location>
        <begin position="265"/>
        <end position="316"/>
    </location>
</feature>
<feature type="region of interest" description="Specificity for association with VLDL" evidence="1">
    <location>
        <begin position="277"/>
        <end position="289"/>
    </location>
</feature>
<feature type="binding site" evidence="1">
    <location>
        <begin position="161"/>
        <end position="164"/>
    </location>
    <ligand>
        <name>heparin</name>
        <dbReference type="ChEBI" id="CHEBI:28304"/>
    </ligand>
</feature>
<feature type="binding site" evidence="1">
    <location>
        <begin position="228"/>
        <end position="235"/>
    </location>
    <ligand>
        <name>heparin</name>
        <dbReference type="ChEBI" id="CHEBI:28304"/>
    </ligand>
</feature>
<sequence length="316" mass="36293">MKVLWVALVITLLAGCQAEVEPEPEPEVQLGREWPRWQGSQPWEQALGRFWDYLRWVQTLSDQVQEELLSTQVIQELTVLMDETMKEVKAYREELEGQLGPIAQETQARVSKELQAAQARLASDMEDVRSRVAQYRSEVQALMGQTTDELRGRLASHLRKLRKRLLRDAEDLQKRLVVYRAGALEGSERSVSAIRERLGPLVEQGRVRAATVGTLASQTLRERAEAWHQKLRGRMEEMGTQARDHLEEMREQLEEVRAKVEEQGSQMRLQAEAFQARLKSWFEPLVEDMQRQWAGLVEKVQLAMATGPTSAPIENN</sequence>